<protein>
    <recommendedName>
        <fullName>Uncharacterized protein 287R</fullName>
    </recommendedName>
</protein>
<reference key="1">
    <citation type="journal article" date="2001" name="Virology">
        <title>Analysis of the first complete DNA sequence of an invertebrate iridovirus: coding strategy of the genome of Chilo iridescent virus.</title>
        <authorList>
            <person name="Jakob N.J."/>
            <person name="Mueller K."/>
            <person name="Bahr U."/>
            <person name="Darai G."/>
        </authorList>
    </citation>
    <scope>NUCLEOTIDE SEQUENCE [LARGE SCALE GENOMIC DNA]</scope>
</reference>
<reference key="2">
    <citation type="journal article" date="2007" name="Virol. J.">
        <title>Comparative genomic analysis of the family Iridoviridae: re-annotating and defining the core set of iridovirus genes.</title>
        <authorList>
            <person name="Eaton H.E."/>
            <person name="Metcalf J."/>
            <person name="Penny E."/>
            <person name="Tcherepanov V."/>
            <person name="Upton C."/>
            <person name="Brunetti C.R."/>
        </authorList>
    </citation>
    <scope>GENOME REANNOTATION</scope>
</reference>
<evidence type="ECO:0000255" key="1"/>
<evidence type="ECO:0000305" key="2"/>
<gene>
    <name type="ORF">IIV6-287R</name>
</gene>
<dbReference type="EMBL" id="AF303741">
    <property type="protein sequence ID" value="AAK82148.1"/>
    <property type="molecule type" value="Genomic_DNA"/>
</dbReference>
<dbReference type="RefSeq" id="NP_149750.1">
    <property type="nucleotide sequence ID" value="NC_003038.1"/>
</dbReference>
<dbReference type="SMR" id="Q91FN7"/>
<dbReference type="KEGG" id="vg:1733080"/>
<dbReference type="OrthoDB" id="8883at10239"/>
<dbReference type="Proteomes" id="UP000001359">
    <property type="component" value="Genome"/>
</dbReference>
<dbReference type="InterPro" id="IPR043872">
    <property type="entry name" value="DUF5832"/>
</dbReference>
<dbReference type="Pfam" id="PF19150">
    <property type="entry name" value="DUF5832"/>
    <property type="match status" value="1"/>
</dbReference>
<feature type="chain" id="PRO_0000377843" description="Uncharacterized protein 287R">
    <location>
        <begin position="1"/>
        <end position="315"/>
    </location>
</feature>
<feature type="coiled-coil region" evidence="1">
    <location>
        <begin position="184"/>
        <end position="212"/>
    </location>
</feature>
<feature type="coiled-coil region" evidence="1">
    <location>
        <begin position="238"/>
        <end position="275"/>
    </location>
</feature>
<sequence length="315" mass="35973">MEHNIAEISVSSLTDPHFLRENKNLFIPDTDPPLSKIETINALSELSIGSSQEIQNPDHKTYSKLGFGKPLFTRADRHYVDPPLSNQDVGLISFVPCNDAKPNKYGVYGFAKIRGTFANVDESDQRASELIQKHDSVHKIYHVKVGTPFPIVHPKISSQYAASVKEIDVKADAKNEISRFVKTAGEEDKKVMEELKEREKQLREDVSKTPEQKLNELTPLDQYIYARKRLSDNLFVFEEHRKKLHDVKKVILQAELEADSLEKTNPEVINQYKEKYEKAAKEAGIDKSTDAMAVMIKENFYNKPNLQKIFSENLV</sequence>
<organismHost>
    <name type="scientific">Acheta domesticus</name>
    <name type="common">House cricket</name>
    <dbReference type="NCBI Taxonomy" id="6997"/>
</organismHost>
<organismHost>
    <name type="scientific">Chilo suppressalis</name>
    <name type="common">Asiatic rice borer moth</name>
    <dbReference type="NCBI Taxonomy" id="168631"/>
</organismHost>
<organismHost>
    <name type="scientific">Gryllus bimaculatus</name>
    <name type="common">Two-spotted cricket</name>
    <dbReference type="NCBI Taxonomy" id="6999"/>
</organismHost>
<organismHost>
    <name type="scientific">Gryllus campestris</name>
    <dbReference type="NCBI Taxonomy" id="58607"/>
</organismHost>
<organismHost>
    <name type="scientific">Spodoptera frugiperda</name>
    <name type="common">Fall armyworm</name>
    <dbReference type="NCBI Taxonomy" id="7108"/>
</organismHost>
<keyword id="KW-0175">Coiled coil</keyword>
<keyword id="KW-1185">Reference proteome</keyword>
<proteinExistence type="inferred from homology"/>
<comment type="similarity">
    <text evidence="2">Belongs to the IIV-6 287R family.</text>
</comment>
<accession>Q91FN7</accession>
<organism>
    <name type="scientific">Invertebrate iridescent virus 6</name>
    <name type="common">IIV-6</name>
    <name type="synonym">Chilo iridescent virus</name>
    <dbReference type="NCBI Taxonomy" id="176652"/>
    <lineage>
        <taxon>Viruses</taxon>
        <taxon>Varidnaviria</taxon>
        <taxon>Bamfordvirae</taxon>
        <taxon>Nucleocytoviricota</taxon>
        <taxon>Megaviricetes</taxon>
        <taxon>Pimascovirales</taxon>
        <taxon>Iridoviridae</taxon>
        <taxon>Betairidovirinae</taxon>
        <taxon>Iridovirus</taxon>
    </lineage>
</organism>
<name>287R_IIV6</name>